<accession>Q96EE4</accession>
<accession>A8K1J6</accession>
<accession>Q6UWP1</accession>
<accession>Q75MQ6</accession>
<feature type="signal peptide" evidence="1">
    <location>
        <begin position="1"/>
        <end position="26"/>
    </location>
</feature>
<feature type="chain" id="PRO_0000288816" description="Coiled-coil domain-containing protein 126">
    <location>
        <begin position="27"/>
        <end position="140"/>
    </location>
</feature>
<feature type="region of interest" description="Disordered" evidence="2">
    <location>
        <begin position="120"/>
        <end position="140"/>
    </location>
</feature>
<feature type="glycosylation site" description="N-linked (GlcNAc...) asparagine" evidence="1">
    <location>
        <position position="110"/>
    </location>
</feature>
<feature type="glycosylation site" description="N-linked (GlcNAc...) asparagine" evidence="1">
    <location>
        <position position="134"/>
    </location>
</feature>
<gene>
    <name type="primary">CCDC126</name>
    <name type="ORF">UNQ786/PRO1605</name>
</gene>
<name>CC126_HUMAN</name>
<evidence type="ECO:0000255" key="1"/>
<evidence type="ECO:0000256" key="2">
    <source>
        <dbReference type="SAM" id="MobiDB-lite"/>
    </source>
</evidence>
<evidence type="ECO:0000305" key="3"/>
<dbReference type="EMBL" id="AY358713">
    <property type="protein sequence ID" value="AAQ89075.1"/>
    <property type="molecule type" value="mRNA"/>
</dbReference>
<dbReference type="EMBL" id="AK289911">
    <property type="protein sequence ID" value="BAF82600.1"/>
    <property type="molecule type" value="mRNA"/>
</dbReference>
<dbReference type="EMBL" id="AC006026">
    <property type="protein sequence ID" value="AAQ96871.1"/>
    <property type="status" value="ALT_SEQ"/>
    <property type="molecule type" value="Genomic_DNA"/>
</dbReference>
<dbReference type="EMBL" id="CH236948">
    <property type="protein sequence ID" value="EAL24252.1"/>
    <property type="molecule type" value="Genomic_DNA"/>
</dbReference>
<dbReference type="EMBL" id="CH471073">
    <property type="protein sequence ID" value="EAW93792.1"/>
    <property type="molecule type" value="Genomic_DNA"/>
</dbReference>
<dbReference type="EMBL" id="BC012427">
    <property type="protein sequence ID" value="AAH12427.2"/>
    <property type="molecule type" value="mRNA"/>
</dbReference>
<dbReference type="EMBL" id="BC104638">
    <property type="protein sequence ID" value="AAI04639.1"/>
    <property type="molecule type" value="mRNA"/>
</dbReference>
<dbReference type="CCDS" id="CCDS5384.1"/>
<dbReference type="RefSeq" id="NP_620126.2">
    <property type="nucleotide sequence ID" value="NM_138771.3"/>
</dbReference>
<dbReference type="RefSeq" id="XP_016868264.1">
    <property type="nucleotide sequence ID" value="XM_017012775.3"/>
</dbReference>
<dbReference type="RefSeq" id="XP_016868265.1">
    <property type="nucleotide sequence ID" value="XM_017012776.1"/>
</dbReference>
<dbReference type="RefSeq" id="XP_054215279.1">
    <property type="nucleotide sequence ID" value="XM_054359304.1"/>
</dbReference>
<dbReference type="SMR" id="Q96EE4"/>
<dbReference type="BioGRID" id="124755">
    <property type="interactions" value="5"/>
</dbReference>
<dbReference type="FunCoup" id="Q96EE4">
    <property type="interactions" value="468"/>
</dbReference>
<dbReference type="IntAct" id="Q96EE4">
    <property type="interactions" value="5"/>
</dbReference>
<dbReference type="STRING" id="9606.ENSP00000304355"/>
<dbReference type="GlyCosmos" id="Q96EE4">
    <property type="glycosylation" value="2 sites, No reported glycans"/>
</dbReference>
<dbReference type="GlyGen" id="Q96EE4">
    <property type="glycosylation" value="3 sites, 1 O-linked glycan (1 site)"/>
</dbReference>
<dbReference type="iPTMnet" id="Q96EE4"/>
<dbReference type="PhosphoSitePlus" id="Q96EE4"/>
<dbReference type="BioMuta" id="CCDC126"/>
<dbReference type="DMDM" id="74731554"/>
<dbReference type="jPOST" id="Q96EE4"/>
<dbReference type="MassIVE" id="Q96EE4"/>
<dbReference type="PaxDb" id="9606-ENSP00000304355"/>
<dbReference type="PeptideAtlas" id="Q96EE4"/>
<dbReference type="ProteomicsDB" id="76400"/>
<dbReference type="Antibodypedia" id="12117">
    <property type="antibodies" value="73 antibodies from 14 providers"/>
</dbReference>
<dbReference type="DNASU" id="90693"/>
<dbReference type="Ensembl" id="ENST00000307471.8">
    <property type="protein sequence ID" value="ENSP00000304355.3"/>
    <property type="gene ID" value="ENSG00000169193.12"/>
</dbReference>
<dbReference type="Ensembl" id="ENST00000409765.5">
    <property type="protein sequence ID" value="ENSP00000386675.1"/>
    <property type="gene ID" value="ENSG00000169193.12"/>
</dbReference>
<dbReference type="Ensembl" id="ENST00000410069.1">
    <property type="protein sequence ID" value="ENSP00000386355.1"/>
    <property type="gene ID" value="ENSG00000169193.12"/>
</dbReference>
<dbReference type="GeneID" id="90693"/>
<dbReference type="KEGG" id="hsa:90693"/>
<dbReference type="MANE-Select" id="ENST00000307471.8">
    <property type="protein sequence ID" value="ENSP00000304355.3"/>
    <property type="RefSeq nucleotide sequence ID" value="NM_138771.4"/>
    <property type="RefSeq protein sequence ID" value="NP_620126.2"/>
</dbReference>
<dbReference type="UCSC" id="uc003swl.3">
    <property type="organism name" value="human"/>
</dbReference>
<dbReference type="AGR" id="HGNC:22398"/>
<dbReference type="CTD" id="90693"/>
<dbReference type="DisGeNET" id="90693"/>
<dbReference type="GeneCards" id="CCDC126"/>
<dbReference type="HGNC" id="HGNC:22398">
    <property type="gene designation" value="CCDC126"/>
</dbReference>
<dbReference type="HPA" id="ENSG00000169193">
    <property type="expression patterns" value="Tissue enhanced (testis)"/>
</dbReference>
<dbReference type="neXtProt" id="NX_Q96EE4"/>
<dbReference type="OpenTargets" id="ENSG00000169193"/>
<dbReference type="PharmGKB" id="PA162381284"/>
<dbReference type="VEuPathDB" id="HostDB:ENSG00000169193"/>
<dbReference type="eggNOG" id="ENOG502RY1D">
    <property type="taxonomic scope" value="Eukaryota"/>
</dbReference>
<dbReference type="GeneTree" id="ENSGT00940000153470"/>
<dbReference type="InParanoid" id="Q96EE4"/>
<dbReference type="OMA" id="VNASAHN"/>
<dbReference type="OrthoDB" id="9946758at2759"/>
<dbReference type="PAN-GO" id="Q96EE4">
    <property type="GO annotations" value="0 GO annotations based on evolutionary models"/>
</dbReference>
<dbReference type="PhylomeDB" id="Q96EE4"/>
<dbReference type="TreeFam" id="TF332515"/>
<dbReference type="PathwayCommons" id="Q96EE4"/>
<dbReference type="SignaLink" id="Q96EE4"/>
<dbReference type="BioGRID-ORCS" id="90693">
    <property type="hits" value="11 hits in 1162 CRISPR screens"/>
</dbReference>
<dbReference type="ChiTaRS" id="CCDC126">
    <property type="organism name" value="human"/>
</dbReference>
<dbReference type="GenomeRNAi" id="90693"/>
<dbReference type="Pharos" id="Q96EE4">
    <property type="development level" value="Tdark"/>
</dbReference>
<dbReference type="PRO" id="PR:Q96EE4"/>
<dbReference type="Proteomes" id="UP000005640">
    <property type="component" value="Chromosome 7"/>
</dbReference>
<dbReference type="RNAct" id="Q96EE4">
    <property type="molecule type" value="protein"/>
</dbReference>
<dbReference type="Bgee" id="ENSG00000169193">
    <property type="expression patterns" value="Expressed in sperm and 166 other cell types or tissues"/>
</dbReference>
<dbReference type="ExpressionAtlas" id="Q96EE4">
    <property type="expression patterns" value="baseline and differential"/>
</dbReference>
<dbReference type="GO" id="GO:0005576">
    <property type="term" value="C:extracellular region"/>
    <property type="evidence" value="ECO:0007669"/>
    <property type="project" value="UniProtKB-SubCell"/>
</dbReference>
<dbReference type="GO" id="GO:0016020">
    <property type="term" value="C:membrane"/>
    <property type="evidence" value="ECO:0007005"/>
    <property type="project" value="UniProtKB"/>
</dbReference>
<dbReference type="InterPro" id="IPR042759">
    <property type="entry name" value="CCDC126"/>
</dbReference>
<dbReference type="InterPro" id="IPR027833">
    <property type="entry name" value="MGT5A-like_N"/>
</dbReference>
<dbReference type="PANTHER" id="PTHR46941">
    <property type="entry name" value="COILED-COIL DOMAIN-CONTAINING PROTEIN 126"/>
    <property type="match status" value="1"/>
</dbReference>
<dbReference type="PANTHER" id="PTHR46941:SF1">
    <property type="entry name" value="COILED-COIL DOMAIN-CONTAINING PROTEIN 126"/>
    <property type="match status" value="1"/>
</dbReference>
<dbReference type="Pfam" id="PF15027">
    <property type="entry name" value="MGT5A_N"/>
    <property type="match status" value="1"/>
</dbReference>
<reference key="1">
    <citation type="journal article" date="2003" name="Genome Res.">
        <title>The secreted protein discovery initiative (SPDI), a large-scale effort to identify novel human secreted and transmembrane proteins: a bioinformatics assessment.</title>
        <authorList>
            <person name="Clark H.F."/>
            <person name="Gurney A.L."/>
            <person name="Abaya E."/>
            <person name="Baker K."/>
            <person name="Baldwin D.T."/>
            <person name="Brush J."/>
            <person name="Chen J."/>
            <person name="Chow B."/>
            <person name="Chui C."/>
            <person name="Crowley C."/>
            <person name="Currell B."/>
            <person name="Deuel B."/>
            <person name="Dowd P."/>
            <person name="Eaton D."/>
            <person name="Foster J.S."/>
            <person name="Grimaldi C."/>
            <person name="Gu Q."/>
            <person name="Hass P.E."/>
            <person name="Heldens S."/>
            <person name="Huang A."/>
            <person name="Kim H.S."/>
            <person name="Klimowski L."/>
            <person name="Jin Y."/>
            <person name="Johnson S."/>
            <person name="Lee J."/>
            <person name="Lewis L."/>
            <person name="Liao D."/>
            <person name="Mark M.R."/>
            <person name="Robbie E."/>
            <person name="Sanchez C."/>
            <person name="Schoenfeld J."/>
            <person name="Seshagiri S."/>
            <person name="Simmons L."/>
            <person name="Singh J."/>
            <person name="Smith V."/>
            <person name="Stinson J."/>
            <person name="Vagts A."/>
            <person name="Vandlen R.L."/>
            <person name="Watanabe C."/>
            <person name="Wieand D."/>
            <person name="Woods K."/>
            <person name="Xie M.-H."/>
            <person name="Yansura D.G."/>
            <person name="Yi S."/>
            <person name="Yu G."/>
            <person name="Yuan J."/>
            <person name="Zhang M."/>
            <person name="Zhang Z."/>
            <person name="Goddard A.D."/>
            <person name="Wood W.I."/>
            <person name="Godowski P.J."/>
            <person name="Gray A.M."/>
        </authorList>
    </citation>
    <scope>NUCLEOTIDE SEQUENCE [LARGE SCALE MRNA]</scope>
</reference>
<reference key="2">
    <citation type="journal article" date="2004" name="Nat. Genet.">
        <title>Complete sequencing and characterization of 21,243 full-length human cDNAs.</title>
        <authorList>
            <person name="Ota T."/>
            <person name="Suzuki Y."/>
            <person name="Nishikawa T."/>
            <person name="Otsuki T."/>
            <person name="Sugiyama T."/>
            <person name="Irie R."/>
            <person name="Wakamatsu A."/>
            <person name="Hayashi K."/>
            <person name="Sato H."/>
            <person name="Nagai K."/>
            <person name="Kimura K."/>
            <person name="Makita H."/>
            <person name="Sekine M."/>
            <person name="Obayashi M."/>
            <person name="Nishi T."/>
            <person name="Shibahara T."/>
            <person name="Tanaka T."/>
            <person name="Ishii S."/>
            <person name="Yamamoto J."/>
            <person name="Saito K."/>
            <person name="Kawai Y."/>
            <person name="Isono Y."/>
            <person name="Nakamura Y."/>
            <person name="Nagahari K."/>
            <person name="Murakami K."/>
            <person name="Yasuda T."/>
            <person name="Iwayanagi T."/>
            <person name="Wagatsuma M."/>
            <person name="Shiratori A."/>
            <person name="Sudo H."/>
            <person name="Hosoiri T."/>
            <person name="Kaku Y."/>
            <person name="Kodaira H."/>
            <person name="Kondo H."/>
            <person name="Sugawara M."/>
            <person name="Takahashi M."/>
            <person name="Kanda K."/>
            <person name="Yokoi T."/>
            <person name="Furuya T."/>
            <person name="Kikkawa E."/>
            <person name="Omura Y."/>
            <person name="Abe K."/>
            <person name="Kamihara K."/>
            <person name="Katsuta N."/>
            <person name="Sato K."/>
            <person name="Tanikawa M."/>
            <person name="Yamazaki M."/>
            <person name="Ninomiya K."/>
            <person name="Ishibashi T."/>
            <person name="Yamashita H."/>
            <person name="Murakawa K."/>
            <person name="Fujimori K."/>
            <person name="Tanai H."/>
            <person name="Kimata M."/>
            <person name="Watanabe M."/>
            <person name="Hiraoka S."/>
            <person name="Chiba Y."/>
            <person name="Ishida S."/>
            <person name="Ono Y."/>
            <person name="Takiguchi S."/>
            <person name="Watanabe S."/>
            <person name="Yosida M."/>
            <person name="Hotuta T."/>
            <person name="Kusano J."/>
            <person name="Kanehori K."/>
            <person name="Takahashi-Fujii A."/>
            <person name="Hara H."/>
            <person name="Tanase T.-O."/>
            <person name="Nomura Y."/>
            <person name="Togiya S."/>
            <person name="Komai F."/>
            <person name="Hara R."/>
            <person name="Takeuchi K."/>
            <person name="Arita M."/>
            <person name="Imose N."/>
            <person name="Musashino K."/>
            <person name="Yuuki H."/>
            <person name="Oshima A."/>
            <person name="Sasaki N."/>
            <person name="Aotsuka S."/>
            <person name="Yoshikawa Y."/>
            <person name="Matsunawa H."/>
            <person name="Ichihara T."/>
            <person name="Shiohata N."/>
            <person name="Sano S."/>
            <person name="Moriya S."/>
            <person name="Momiyama H."/>
            <person name="Satoh N."/>
            <person name="Takami S."/>
            <person name="Terashima Y."/>
            <person name="Suzuki O."/>
            <person name="Nakagawa S."/>
            <person name="Senoh A."/>
            <person name="Mizoguchi H."/>
            <person name="Goto Y."/>
            <person name="Shimizu F."/>
            <person name="Wakebe H."/>
            <person name="Hishigaki H."/>
            <person name="Watanabe T."/>
            <person name="Sugiyama A."/>
            <person name="Takemoto M."/>
            <person name="Kawakami B."/>
            <person name="Yamazaki M."/>
            <person name="Watanabe K."/>
            <person name="Kumagai A."/>
            <person name="Itakura S."/>
            <person name="Fukuzumi Y."/>
            <person name="Fujimori Y."/>
            <person name="Komiyama M."/>
            <person name="Tashiro H."/>
            <person name="Tanigami A."/>
            <person name="Fujiwara T."/>
            <person name="Ono T."/>
            <person name="Yamada K."/>
            <person name="Fujii Y."/>
            <person name="Ozaki K."/>
            <person name="Hirao M."/>
            <person name="Ohmori Y."/>
            <person name="Kawabata A."/>
            <person name="Hikiji T."/>
            <person name="Kobatake N."/>
            <person name="Inagaki H."/>
            <person name="Ikema Y."/>
            <person name="Okamoto S."/>
            <person name="Okitani R."/>
            <person name="Kawakami T."/>
            <person name="Noguchi S."/>
            <person name="Itoh T."/>
            <person name="Shigeta K."/>
            <person name="Senba T."/>
            <person name="Matsumura K."/>
            <person name="Nakajima Y."/>
            <person name="Mizuno T."/>
            <person name="Morinaga M."/>
            <person name="Sasaki M."/>
            <person name="Togashi T."/>
            <person name="Oyama M."/>
            <person name="Hata H."/>
            <person name="Watanabe M."/>
            <person name="Komatsu T."/>
            <person name="Mizushima-Sugano J."/>
            <person name="Satoh T."/>
            <person name="Shirai Y."/>
            <person name="Takahashi Y."/>
            <person name="Nakagawa K."/>
            <person name="Okumura K."/>
            <person name="Nagase T."/>
            <person name="Nomura N."/>
            <person name="Kikuchi H."/>
            <person name="Masuho Y."/>
            <person name="Yamashita R."/>
            <person name="Nakai K."/>
            <person name="Yada T."/>
            <person name="Nakamura Y."/>
            <person name="Ohara O."/>
            <person name="Isogai T."/>
            <person name="Sugano S."/>
        </authorList>
    </citation>
    <scope>NUCLEOTIDE SEQUENCE [LARGE SCALE MRNA]</scope>
    <source>
        <tissue>Corpus callosum</tissue>
    </source>
</reference>
<reference key="3">
    <citation type="journal article" date="2003" name="Nature">
        <title>The DNA sequence of human chromosome 7.</title>
        <authorList>
            <person name="Hillier L.W."/>
            <person name="Fulton R.S."/>
            <person name="Fulton L.A."/>
            <person name="Graves T.A."/>
            <person name="Pepin K.H."/>
            <person name="Wagner-McPherson C."/>
            <person name="Layman D."/>
            <person name="Maas J."/>
            <person name="Jaeger S."/>
            <person name="Walker R."/>
            <person name="Wylie K."/>
            <person name="Sekhon M."/>
            <person name="Becker M.C."/>
            <person name="O'Laughlin M.D."/>
            <person name="Schaller M.E."/>
            <person name="Fewell G.A."/>
            <person name="Delehaunty K.D."/>
            <person name="Miner T.L."/>
            <person name="Nash W.E."/>
            <person name="Cordes M."/>
            <person name="Du H."/>
            <person name="Sun H."/>
            <person name="Edwards J."/>
            <person name="Bradshaw-Cordum H."/>
            <person name="Ali J."/>
            <person name="Andrews S."/>
            <person name="Isak A."/>
            <person name="Vanbrunt A."/>
            <person name="Nguyen C."/>
            <person name="Du F."/>
            <person name="Lamar B."/>
            <person name="Courtney L."/>
            <person name="Kalicki J."/>
            <person name="Ozersky P."/>
            <person name="Bielicki L."/>
            <person name="Scott K."/>
            <person name="Holmes A."/>
            <person name="Harkins R."/>
            <person name="Harris A."/>
            <person name="Strong C.M."/>
            <person name="Hou S."/>
            <person name="Tomlinson C."/>
            <person name="Dauphin-Kohlberg S."/>
            <person name="Kozlowicz-Reilly A."/>
            <person name="Leonard S."/>
            <person name="Rohlfing T."/>
            <person name="Rock S.M."/>
            <person name="Tin-Wollam A.-M."/>
            <person name="Abbott A."/>
            <person name="Minx P."/>
            <person name="Maupin R."/>
            <person name="Strowmatt C."/>
            <person name="Latreille P."/>
            <person name="Miller N."/>
            <person name="Johnson D."/>
            <person name="Murray J."/>
            <person name="Woessner J.P."/>
            <person name="Wendl M.C."/>
            <person name="Yang S.-P."/>
            <person name="Schultz B.R."/>
            <person name="Wallis J.W."/>
            <person name="Spieth J."/>
            <person name="Bieri T.A."/>
            <person name="Nelson J.O."/>
            <person name="Berkowicz N."/>
            <person name="Wohldmann P.E."/>
            <person name="Cook L.L."/>
            <person name="Hickenbotham M.T."/>
            <person name="Eldred J."/>
            <person name="Williams D."/>
            <person name="Bedell J.A."/>
            <person name="Mardis E.R."/>
            <person name="Clifton S.W."/>
            <person name="Chissoe S.L."/>
            <person name="Marra M.A."/>
            <person name="Raymond C."/>
            <person name="Haugen E."/>
            <person name="Gillett W."/>
            <person name="Zhou Y."/>
            <person name="James R."/>
            <person name="Phelps K."/>
            <person name="Iadanoto S."/>
            <person name="Bubb K."/>
            <person name="Simms E."/>
            <person name="Levy R."/>
            <person name="Clendenning J."/>
            <person name="Kaul R."/>
            <person name="Kent W.J."/>
            <person name="Furey T.S."/>
            <person name="Baertsch R.A."/>
            <person name="Brent M.R."/>
            <person name="Keibler E."/>
            <person name="Flicek P."/>
            <person name="Bork P."/>
            <person name="Suyama M."/>
            <person name="Bailey J.A."/>
            <person name="Portnoy M.E."/>
            <person name="Torrents D."/>
            <person name="Chinwalla A.T."/>
            <person name="Gish W.R."/>
            <person name="Eddy S.R."/>
            <person name="McPherson J.D."/>
            <person name="Olson M.V."/>
            <person name="Eichler E.E."/>
            <person name="Green E.D."/>
            <person name="Waterston R.H."/>
            <person name="Wilson R.K."/>
        </authorList>
    </citation>
    <scope>NUCLEOTIDE SEQUENCE [LARGE SCALE GENOMIC DNA]</scope>
</reference>
<reference key="4">
    <citation type="journal article" date="2003" name="Science">
        <title>Human chromosome 7: DNA sequence and biology.</title>
        <authorList>
            <person name="Scherer S.W."/>
            <person name="Cheung J."/>
            <person name="MacDonald J.R."/>
            <person name="Osborne L.R."/>
            <person name="Nakabayashi K."/>
            <person name="Herbrick J.-A."/>
            <person name="Carson A.R."/>
            <person name="Parker-Katiraee L."/>
            <person name="Skaug J."/>
            <person name="Khaja R."/>
            <person name="Zhang J."/>
            <person name="Hudek A.K."/>
            <person name="Li M."/>
            <person name="Haddad M."/>
            <person name="Duggan G.E."/>
            <person name="Fernandez B.A."/>
            <person name="Kanematsu E."/>
            <person name="Gentles S."/>
            <person name="Christopoulos C.C."/>
            <person name="Choufani S."/>
            <person name="Kwasnicka D."/>
            <person name="Zheng X.H."/>
            <person name="Lai Z."/>
            <person name="Nusskern D.R."/>
            <person name="Zhang Q."/>
            <person name="Gu Z."/>
            <person name="Lu F."/>
            <person name="Zeesman S."/>
            <person name="Nowaczyk M.J."/>
            <person name="Teshima I."/>
            <person name="Chitayat D."/>
            <person name="Shuman C."/>
            <person name="Weksberg R."/>
            <person name="Zackai E.H."/>
            <person name="Grebe T.A."/>
            <person name="Cox S.R."/>
            <person name="Kirkpatrick S.J."/>
            <person name="Rahman N."/>
            <person name="Friedman J.M."/>
            <person name="Heng H.H.Q."/>
            <person name="Pelicci P.G."/>
            <person name="Lo-Coco F."/>
            <person name="Belloni E."/>
            <person name="Shaffer L.G."/>
            <person name="Pober B."/>
            <person name="Morton C.C."/>
            <person name="Gusella J.F."/>
            <person name="Bruns G.A.P."/>
            <person name="Korf B.R."/>
            <person name="Quade B.J."/>
            <person name="Ligon A.H."/>
            <person name="Ferguson H."/>
            <person name="Higgins A.W."/>
            <person name="Leach N.T."/>
            <person name="Herrick S.R."/>
            <person name="Lemyre E."/>
            <person name="Farra C.G."/>
            <person name="Kim H.-G."/>
            <person name="Summers A.M."/>
            <person name="Gripp K.W."/>
            <person name="Roberts W."/>
            <person name="Szatmari P."/>
            <person name="Winsor E.J.T."/>
            <person name="Grzeschik K.-H."/>
            <person name="Teebi A."/>
            <person name="Minassian B.A."/>
            <person name="Kere J."/>
            <person name="Armengol L."/>
            <person name="Pujana M.A."/>
            <person name="Estivill X."/>
            <person name="Wilson M.D."/>
            <person name="Koop B.F."/>
            <person name="Tosi S."/>
            <person name="Moore G.E."/>
            <person name="Boright A.P."/>
            <person name="Zlotorynski E."/>
            <person name="Kerem B."/>
            <person name="Kroisel P.M."/>
            <person name="Petek E."/>
            <person name="Oscier D.G."/>
            <person name="Mould S.J."/>
            <person name="Doehner H."/>
            <person name="Doehner K."/>
            <person name="Rommens J.M."/>
            <person name="Vincent J.B."/>
            <person name="Venter J.C."/>
            <person name="Li P.W."/>
            <person name="Mural R.J."/>
            <person name="Adams M.D."/>
            <person name="Tsui L.-C."/>
        </authorList>
    </citation>
    <scope>NUCLEOTIDE SEQUENCE [LARGE SCALE GENOMIC DNA]</scope>
</reference>
<reference key="5">
    <citation type="submission" date="2005-07" db="EMBL/GenBank/DDBJ databases">
        <authorList>
            <person name="Mural R.J."/>
            <person name="Istrail S."/>
            <person name="Sutton G.G."/>
            <person name="Florea L."/>
            <person name="Halpern A.L."/>
            <person name="Mobarry C.M."/>
            <person name="Lippert R."/>
            <person name="Walenz B."/>
            <person name="Shatkay H."/>
            <person name="Dew I."/>
            <person name="Miller J.R."/>
            <person name="Flanigan M.J."/>
            <person name="Edwards N.J."/>
            <person name="Bolanos R."/>
            <person name="Fasulo D."/>
            <person name="Halldorsson B.V."/>
            <person name="Hannenhalli S."/>
            <person name="Turner R."/>
            <person name="Yooseph S."/>
            <person name="Lu F."/>
            <person name="Nusskern D.R."/>
            <person name="Shue B.C."/>
            <person name="Zheng X.H."/>
            <person name="Zhong F."/>
            <person name="Delcher A.L."/>
            <person name="Huson D.H."/>
            <person name="Kravitz S.A."/>
            <person name="Mouchard L."/>
            <person name="Reinert K."/>
            <person name="Remington K.A."/>
            <person name="Clark A.G."/>
            <person name="Waterman M.S."/>
            <person name="Eichler E.E."/>
            <person name="Adams M.D."/>
            <person name="Hunkapiller M.W."/>
            <person name="Myers E.W."/>
            <person name="Venter J.C."/>
        </authorList>
    </citation>
    <scope>NUCLEOTIDE SEQUENCE [LARGE SCALE GENOMIC DNA]</scope>
</reference>
<reference key="6">
    <citation type="journal article" date="2004" name="Genome Res.">
        <title>The status, quality, and expansion of the NIH full-length cDNA project: the Mammalian Gene Collection (MGC).</title>
        <authorList>
            <consortium name="The MGC Project Team"/>
        </authorList>
    </citation>
    <scope>NUCLEOTIDE SEQUENCE [LARGE SCALE MRNA]</scope>
    <source>
        <tissue>Ovary</tissue>
        <tissue>Testis</tissue>
    </source>
</reference>
<comment type="subcellular location">
    <subcellularLocation>
        <location evidence="3">Secreted</location>
    </subcellularLocation>
</comment>
<comment type="sequence caution" evidence="3">
    <conflict type="erroneous gene model prediction">
        <sequence resource="EMBL-CDS" id="AAQ96871"/>
    </conflict>
</comment>
<sequence length="140" mass="15668">MFFTISRKNMSQKLSLLLLVFGLIWGLMLLHYTFQQPRHQSSVKLREQILDLSKRYVKALAEENKNTVDVENGASMAGYADLKRTIAVLLDDILQRLVKLENKVDYIVVNGSAANTTNGTSGNLVPVTTNKRTNVSGSIR</sequence>
<organism>
    <name type="scientific">Homo sapiens</name>
    <name type="common">Human</name>
    <dbReference type="NCBI Taxonomy" id="9606"/>
    <lineage>
        <taxon>Eukaryota</taxon>
        <taxon>Metazoa</taxon>
        <taxon>Chordata</taxon>
        <taxon>Craniata</taxon>
        <taxon>Vertebrata</taxon>
        <taxon>Euteleostomi</taxon>
        <taxon>Mammalia</taxon>
        <taxon>Eutheria</taxon>
        <taxon>Euarchontoglires</taxon>
        <taxon>Primates</taxon>
        <taxon>Haplorrhini</taxon>
        <taxon>Catarrhini</taxon>
        <taxon>Hominidae</taxon>
        <taxon>Homo</taxon>
    </lineage>
</organism>
<proteinExistence type="evidence at protein level"/>
<keyword id="KW-0325">Glycoprotein</keyword>
<keyword id="KW-1267">Proteomics identification</keyword>
<keyword id="KW-1185">Reference proteome</keyword>
<keyword id="KW-0964">Secreted</keyword>
<keyword id="KW-0732">Signal</keyword>
<protein>
    <recommendedName>
        <fullName>Coiled-coil domain-containing protein 126</fullName>
    </recommendedName>
</protein>